<sequence>MSSVVVVGTQWGDEGKGKITDFLSENAEAIARYQGGNNAGHTIKFDGVTYKLHLIPSGIFYKEKISVIGNGMVVDPKALVEELKYLHDKGVDTSNLRISNRAHIILPYHIRIDEADEERKGANKIGTTKKGIGPAYMDKAARVGIRIIDLLDKETFKEKLEHNLGEKNRLLERFYELEGFKLEDILDEYYEYGQQFKEYVCDTSVVLNDALDDGKRVLFEGAQGVMLDIDQGTYPFVTSSNPIAGGVTIGSGVGPSKINHVVGVAKAYTTRVGDGPFPTELFDSIGDTIREVGHEYGTTTGRPRRVGWFDSVVVRHARRVSGLTDLSLTLLDVLTGIETLKICVAYKLDGKTITEFPASLKDLARCEPVYEELPGWTEDITGVTSLDDLPVNCRHYMERIAQLTGVQVSMFSVGPDRAQTHVIKSVWRLA</sequence>
<comment type="function">
    <text evidence="1">Plays an important role in the de novo pathway of purine nucleotide biosynthesis. Catalyzes the first committed step in the biosynthesis of AMP from IMP.</text>
</comment>
<comment type="catalytic activity">
    <reaction evidence="1">
        <text>IMP + L-aspartate + GTP = N(6)-(1,2-dicarboxyethyl)-AMP + GDP + phosphate + 2 H(+)</text>
        <dbReference type="Rhea" id="RHEA:15753"/>
        <dbReference type="ChEBI" id="CHEBI:15378"/>
        <dbReference type="ChEBI" id="CHEBI:29991"/>
        <dbReference type="ChEBI" id="CHEBI:37565"/>
        <dbReference type="ChEBI" id="CHEBI:43474"/>
        <dbReference type="ChEBI" id="CHEBI:57567"/>
        <dbReference type="ChEBI" id="CHEBI:58053"/>
        <dbReference type="ChEBI" id="CHEBI:58189"/>
        <dbReference type="EC" id="6.3.4.4"/>
    </reaction>
</comment>
<comment type="cofactor">
    <cofactor evidence="1">
        <name>Mg(2+)</name>
        <dbReference type="ChEBI" id="CHEBI:18420"/>
    </cofactor>
    <text evidence="1">Binds 1 Mg(2+) ion per subunit.</text>
</comment>
<comment type="pathway">
    <text evidence="1">Purine metabolism; AMP biosynthesis via de novo pathway; AMP from IMP: step 1/2.</text>
</comment>
<comment type="subunit">
    <text evidence="1">Homodimer.</text>
</comment>
<comment type="subcellular location">
    <subcellularLocation>
        <location evidence="1">Cytoplasm</location>
    </subcellularLocation>
</comment>
<comment type="similarity">
    <text evidence="1">Belongs to the adenylosuccinate synthetase family.</text>
</comment>
<name>PURA_LISMO</name>
<reference key="1">
    <citation type="journal article" date="2001" name="Science">
        <title>Comparative genomics of Listeria species.</title>
        <authorList>
            <person name="Glaser P."/>
            <person name="Frangeul L."/>
            <person name="Buchrieser C."/>
            <person name="Rusniok C."/>
            <person name="Amend A."/>
            <person name="Baquero F."/>
            <person name="Berche P."/>
            <person name="Bloecker H."/>
            <person name="Brandt P."/>
            <person name="Chakraborty T."/>
            <person name="Charbit A."/>
            <person name="Chetouani F."/>
            <person name="Couve E."/>
            <person name="de Daruvar A."/>
            <person name="Dehoux P."/>
            <person name="Domann E."/>
            <person name="Dominguez-Bernal G."/>
            <person name="Duchaud E."/>
            <person name="Durant L."/>
            <person name="Dussurget O."/>
            <person name="Entian K.-D."/>
            <person name="Fsihi H."/>
            <person name="Garcia-del Portillo F."/>
            <person name="Garrido P."/>
            <person name="Gautier L."/>
            <person name="Goebel W."/>
            <person name="Gomez-Lopez N."/>
            <person name="Hain T."/>
            <person name="Hauf J."/>
            <person name="Jackson D."/>
            <person name="Jones L.-M."/>
            <person name="Kaerst U."/>
            <person name="Kreft J."/>
            <person name="Kuhn M."/>
            <person name="Kunst F."/>
            <person name="Kurapkat G."/>
            <person name="Madueno E."/>
            <person name="Maitournam A."/>
            <person name="Mata Vicente J."/>
            <person name="Ng E."/>
            <person name="Nedjari H."/>
            <person name="Nordsiek G."/>
            <person name="Novella S."/>
            <person name="de Pablos B."/>
            <person name="Perez-Diaz J.-C."/>
            <person name="Purcell R."/>
            <person name="Remmel B."/>
            <person name="Rose M."/>
            <person name="Schlueter T."/>
            <person name="Simoes N."/>
            <person name="Tierrez A."/>
            <person name="Vazquez-Boland J.-A."/>
            <person name="Voss H."/>
            <person name="Wehland J."/>
            <person name="Cossart P."/>
        </authorList>
    </citation>
    <scope>NUCLEOTIDE SEQUENCE [LARGE SCALE GENOMIC DNA]</scope>
    <source>
        <strain>ATCC BAA-679 / EGD-e</strain>
    </source>
</reference>
<accession>Q8YAR1</accession>
<proteinExistence type="inferred from homology"/>
<organism>
    <name type="scientific">Listeria monocytogenes serovar 1/2a (strain ATCC BAA-679 / EGD-e)</name>
    <dbReference type="NCBI Taxonomy" id="169963"/>
    <lineage>
        <taxon>Bacteria</taxon>
        <taxon>Bacillati</taxon>
        <taxon>Bacillota</taxon>
        <taxon>Bacilli</taxon>
        <taxon>Bacillales</taxon>
        <taxon>Listeriaceae</taxon>
        <taxon>Listeria</taxon>
    </lineage>
</organism>
<evidence type="ECO:0000255" key="1">
    <source>
        <dbReference type="HAMAP-Rule" id="MF_00011"/>
    </source>
</evidence>
<keyword id="KW-0963">Cytoplasm</keyword>
<keyword id="KW-0342">GTP-binding</keyword>
<keyword id="KW-0436">Ligase</keyword>
<keyword id="KW-0460">Magnesium</keyword>
<keyword id="KW-0479">Metal-binding</keyword>
<keyword id="KW-0547">Nucleotide-binding</keyword>
<keyword id="KW-0658">Purine biosynthesis</keyword>
<keyword id="KW-1185">Reference proteome</keyword>
<protein>
    <recommendedName>
        <fullName evidence="1">Adenylosuccinate synthetase</fullName>
        <shortName evidence="1">AMPSase</shortName>
        <shortName evidence="1">AdSS</shortName>
        <ecNumber evidence="1">6.3.4.4</ecNumber>
    </recommendedName>
    <alternativeName>
        <fullName evidence="1">IMP--aspartate ligase</fullName>
    </alternativeName>
</protein>
<gene>
    <name evidence="1" type="primary">purA</name>
    <name type="ordered locus">lmo0055</name>
</gene>
<dbReference type="EC" id="6.3.4.4" evidence="1"/>
<dbReference type="EMBL" id="AL591973">
    <property type="protein sequence ID" value="CAC98270.1"/>
    <property type="molecule type" value="Genomic_DNA"/>
</dbReference>
<dbReference type="PIR" id="AH1081">
    <property type="entry name" value="AH1081"/>
</dbReference>
<dbReference type="RefSeq" id="NP_463588.1">
    <property type="nucleotide sequence ID" value="NC_003210.1"/>
</dbReference>
<dbReference type="RefSeq" id="WP_003721679.1">
    <property type="nucleotide sequence ID" value="NZ_CP149495.1"/>
</dbReference>
<dbReference type="SMR" id="Q8YAR1"/>
<dbReference type="STRING" id="169963.gene:17592690"/>
<dbReference type="PaxDb" id="169963-lmo0055"/>
<dbReference type="EnsemblBacteria" id="CAC98270">
    <property type="protein sequence ID" value="CAC98270"/>
    <property type="gene ID" value="CAC98270"/>
</dbReference>
<dbReference type="GeneID" id="986069"/>
<dbReference type="KEGG" id="lmo:lmo0055"/>
<dbReference type="PATRIC" id="fig|169963.11.peg.57"/>
<dbReference type="eggNOG" id="COG0104">
    <property type="taxonomic scope" value="Bacteria"/>
</dbReference>
<dbReference type="HOGENOM" id="CLU_029848_0_0_9"/>
<dbReference type="OrthoDB" id="9807553at2"/>
<dbReference type="PhylomeDB" id="Q8YAR1"/>
<dbReference type="BioCyc" id="LMON169963:LMO0055-MONOMER"/>
<dbReference type="UniPathway" id="UPA00075">
    <property type="reaction ID" value="UER00335"/>
</dbReference>
<dbReference type="Proteomes" id="UP000000817">
    <property type="component" value="Chromosome"/>
</dbReference>
<dbReference type="GO" id="GO:0005737">
    <property type="term" value="C:cytoplasm"/>
    <property type="evidence" value="ECO:0000318"/>
    <property type="project" value="GO_Central"/>
</dbReference>
<dbReference type="GO" id="GO:0004019">
    <property type="term" value="F:adenylosuccinate synthase activity"/>
    <property type="evidence" value="ECO:0000318"/>
    <property type="project" value="GO_Central"/>
</dbReference>
<dbReference type="GO" id="GO:0005525">
    <property type="term" value="F:GTP binding"/>
    <property type="evidence" value="ECO:0007669"/>
    <property type="project" value="UniProtKB-UniRule"/>
</dbReference>
<dbReference type="GO" id="GO:0000287">
    <property type="term" value="F:magnesium ion binding"/>
    <property type="evidence" value="ECO:0007669"/>
    <property type="project" value="UniProtKB-UniRule"/>
</dbReference>
<dbReference type="GO" id="GO:0044208">
    <property type="term" value="P:'de novo' AMP biosynthetic process"/>
    <property type="evidence" value="ECO:0000318"/>
    <property type="project" value="GO_Central"/>
</dbReference>
<dbReference type="GO" id="GO:0046040">
    <property type="term" value="P:IMP metabolic process"/>
    <property type="evidence" value="ECO:0000318"/>
    <property type="project" value="GO_Central"/>
</dbReference>
<dbReference type="CDD" id="cd03108">
    <property type="entry name" value="AdSS"/>
    <property type="match status" value="1"/>
</dbReference>
<dbReference type="FunFam" id="1.10.300.10:FF:000001">
    <property type="entry name" value="Adenylosuccinate synthetase"/>
    <property type="match status" value="1"/>
</dbReference>
<dbReference type="FunFam" id="3.90.170.10:FF:000001">
    <property type="entry name" value="Adenylosuccinate synthetase"/>
    <property type="match status" value="1"/>
</dbReference>
<dbReference type="Gene3D" id="3.40.440.10">
    <property type="entry name" value="Adenylosuccinate Synthetase, subunit A, domain 1"/>
    <property type="match status" value="1"/>
</dbReference>
<dbReference type="Gene3D" id="1.10.300.10">
    <property type="entry name" value="Adenylosuccinate Synthetase, subunit A, domain 2"/>
    <property type="match status" value="1"/>
</dbReference>
<dbReference type="Gene3D" id="3.90.170.10">
    <property type="entry name" value="Adenylosuccinate Synthetase, subunit A, domain 3"/>
    <property type="match status" value="1"/>
</dbReference>
<dbReference type="HAMAP" id="MF_00011">
    <property type="entry name" value="Adenylosucc_synth"/>
    <property type="match status" value="1"/>
</dbReference>
<dbReference type="InterPro" id="IPR018220">
    <property type="entry name" value="Adenylosuccin_syn_GTP-bd"/>
</dbReference>
<dbReference type="InterPro" id="IPR033128">
    <property type="entry name" value="Adenylosuccin_syn_Lys_AS"/>
</dbReference>
<dbReference type="InterPro" id="IPR042109">
    <property type="entry name" value="Adenylosuccinate_synth_dom1"/>
</dbReference>
<dbReference type="InterPro" id="IPR042110">
    <property type="entry name" value="Adenylosuccinate_synth_dom2"/>
</dbReference>
<dbReference type="InterPro" id="IPR042111">
    <property type="entry name" value="Adenylosuccinate_synth_dom3"/>
</dbReference>
<dbReference type="InterPro" id="IPR001114">
    <property type="entry name" value="Adenylosuccinate_synthetase"/>
</dbReference>
<dbReference type="InterPro" id="IPR027417">
    <property type="entry name" value="P-loop_NTPase"/>
</dbReference>
<dbReference type="NCBIfam" id="NF002223">
    <property type="entry name" value="PRK01117.1"/>
    <property type="match status" value="1"/>
</dbReference>
<dbReference type="NCBIfam" id="TIGR00184">
    <property type="entry name" value="purA"/>
    <property type="match status" value="1"/>
</dbReference>
<dbReference type="PANTHER" id="PTHR11846">
    <property type="entry name" value="ADENYLOSUCCINATE SYNTHETASE"/>
    <property type="match status" value="1"/>
</dbReference>
<dbReference type="PANTHER" id="PTHR11846:SF0">
    <property type="entry name" value="ADENYLOSUCCINATE SYNTHETASE"/>
    <property type="match status" value="1"/>
</dbReference>
<dbReference type="Pfam" id="PF00709">
    <property type="entry name" value="Adenylsucc_synt"/>
    <property type="match status" value="1"/>
</dbReference>
<dbReference type="SMART" id="SM00788">
    <property type="entry name" value="Adenylsucc_synt"/>
    <property type="match status" value="1"/>
</dbReference>
<dbReference type="SUPFAM" id="SSF52540">
    <property type="entry name" value="P-loop containing nucleoside triphosphate hydrolases"/>
    <property type="match status" value="1"/>
</dbReference>
<dbReference type="PROSITE" id="PS01266">
    <property type="entry name" value="ADENYLOSUCCIN_SYN_1"/>
    <property type="match status" value="1"/>
</dbReference>
<dbReference type="PROSITE" id="PS00513">
    <property type="entry name" value="ADENYLOSUCCIN_SYN_2"/>
    <property type="match status" value="1"/>
</dbReference>
<feature type="chain" id="PRO_0000095196" description="Adenylosuccinate synthetase">
    <location>
        <begin position="1"/>
        <end position="430"/>
    </location>
</feature>
<feature type="active site" description="Proton acceptor" evidence="1">
    <location>
        <position position="13"/>
    </location>
</feature>
<feature type="active site" description="Proton donor" evidence="1">
    <location>
        <position position="41"/>
    </location>
</feature>
<feature type="binding site" evidence="1">
    <location>
        <begin position="12"/>
        <end position="18"/>
    </location>
    <ligand>
        <name>GTP</name>
        <dbReference type="ChEBI" id="CHEBI:37565"/>
    </ligand>
</feature>
<feature type="binding site" description="in other chain" evidence="1">
    <location>
        <begin position="13"/>
        <end position="16"/>
    </location>
    <ligand>
        <name>IMP</name>
        <dbReference type="ChEBI" id="CHEBI:58053"/>
        <note>ligand shared between dimeric partners</note>
    </ligand>
</feature>
<feature type="binding site" evidence="1">
    <location>
        <position position="13"/>
    </location>
    <ligand>
        <name>Mg(2+)</name>
        <dbReference type="ChEBI" id="CHEBI:18420"/>
    </ligand>
</feature>
<feature type="binding site" description="in other chain" evidence="1">
    <location>
        <begin position="38"/>
        <end position="41"/>
    </location>
    <ligand>
        <name>IMP</name>
        <dbReference type="ChEBI" id="CHEBI:58053"/>
        <note>ligand shared between dimeric partners</note>
    </ligand>
</feature>
<feature type="binding site" evidence="1">
    <location>
        <begin position="40"/>
        <end position="42"/>
    </location>
    <ligand>
        <name>GTP</name>
        <dbReference type="ChEBI" id="CHEBI:37565"/>
    </ligand>
</feature>
<feature type="binding site" evidence="1">
    <location>
        <position position="40"/>
    </location>
    <ligand>
        <name>Mg(2+)</name>
        <dbReference type="ChEBI" id="CHEBI:18420"/>
    </ligand>
</feature>
<feature type="binding site" description="in other chain" evidence="1">
    <location>
        <position position="128"/>
    </location>
    <ligand>
        <name>IMP</name>
        <dbReference type="ChEBI" id="CHEBI:58053"/>
        <note>ligand shared between dimeric partners</note>
    </ligand>
</feature>
<feature type="binding site" evidence="1">
    <location>
        <position position="142"/>
    </location>
    <ligand>
        <name>IMP</name>
        <dbReference type="ChEBI" id="CHEBI:58053"/>
        <note>ligand shared between dimeric partners</note>
    </ligand>
</feature>
<feature type="binding site" description="in other chain" evidence="1">
    <location>
        <position position="223"/>
    </location>
    <ligand>
        <name>IMP</name>
        <dbReference type="ChEBI" id="CHEBI:58053"/>
        <note>ligand shared between dimeric partners</note>
    </ligand>
</feature>
<feature type="binding site" description="in other chain" evidence="1">
    <location>
        <position position="238"/>
    </location>
    <ligand>
        <name>IMP</name>
        <dbReference type="ChEBI" id="CHEBI:58053"/>
        <note>ligand shared between dimeric partners</note>
    </ligand>
</feature>
<feature type="binding site" evidence="1">
    <location>
        <begin position="298"/>
        <end position="304"/>
    </location>
    <ligand>
        <name>substrate</name>
    </ligand>
</feature>
<feature type="binding site" description="in other chain" evidence="1">
    <location>
        <position position="302"/>
    </location>
    <ligand>
        <name>IMP</name>
        <dbReference type="ChEBI" id="CHEBI:58053"/>
        <note>ligand shared between dimeric partners</note>
    </ligand>
</feature>
<feature type="binding site" evidence="1">
    <location>
        <position position="304"/>
    </location>
    <ligand>
        <name>GTP</name>
        <dbReference type="ChEBI" id="CHEBI:37565"/>
    </ligand>
</feature>
<feature type="binding site" evidence="1">
    <location>
        <begin position="330"/>
        <end position="332"/>
    </location>
    <ligand>
        <name>GTP</name>
        <dbReference type="ChEBI" id="CHEBI:37565"/>
    </ligand>
</feature>
<feature type="binding site" evidence="1">
    <location>
        <begin position="412"/>
        <end position="414"/>
    </location>
    <ligand>
        <name>GTP</name>
        <dbReference type="ChEBI" id="CHEBI:37565"/>
    </ligand>
</feature>